<proteinExistence type="evidence at protein level"/>
<sequence>MFDVAIIGAGVIGCSIARELSKYNLNVALIEKENDVGNVTTKANSAIIHAGYDAKPGTLKGKLNAKGNLMFDELCRELEVPFKRVGSLVLAFDDDEMKTLGKLYEQGIQNGVPELYILSKEKVLEMDPNISDNIKGALYAKTGGIIGPWEFTIALAENAVENGVNIFLSNEVVDIEKKDFGYRIITNKDTYDTKYVVNCAGLYADKINNMVSNNKMEIIPRRGQYYLLDKTVGNLVKYVIFQCPSKLGKGVLVTPTVHGNLLIGPDAEDLIDKTALNTTSEGLNFIVEVARRSVKTLPLNMAITNFAGLRARTERDDFIIEEAVDAKGFINVAGIESPGLSSAPAISLYVIDILKNIAKKIEKKENFNPYRRAIPKFIELSEDEKNELVKKDKRFGKIICRCESITEGEIVSAIHRNVGARTVDAVKRRVRAGMGRCQGGFCSPRVIEILARELGVEMTEIEKDHEGSYILTGPTKSEVQ</sequence>
<gene>
    <name evidence="6" type="primary">lhgO_1</name>
    <name evidence="6" type="ORF">ABG79_00405</name>
</gene>
<name>GLPDH_CALMK</name>
<evidence type="ECO:0000250" key="1">
    <source>
        <dbReference type="UniProtKB" id="P05340"/>
    </source>
</evidence>
<evidence type="ECO:0000250" key="2">
    <source>
        <dbReference type="UniProtKB" id="P75063"/>
    </source>
</evidence>
<evidence type="ECO:0000269" key="3">
    <source>
    </source>
</evidence>
<evidence type="ECO:0000305" key="4"/>
<evidence type="ECO:0000305" key="5">
    <source>
    </source>
</evidence>
<evidence type="ECO:0000312" key="6">
    <source>
        <dbReference type="EMBL" id="KRQ87604.1"/>
    </source>
</evidence>
<organism>
    <name type="scientific">Caloramator mitchellensis</name>
    <dbReference type="NCBI Taxonomy" id="908809"/>
    <lineage>
        <taxon>Bacteria</taxon>
        <taxon>Bacillati</taxon>
        <taxon>Bacillota</taxon>
        <taxon>Clostridia</taxon>
        <taxon>Eubacteriales</taxon>
        <taxon>Clostridiaceae</taxon>
        <taxon>Caloramator</taxon>
    </lineage>
</organism>
<comment type="function">
    <text evidence="3 4">Catalyzes the dehydrogenation of glycerol 3-phosphate to dihydroxyacetone phosphate (PubMed:34555022). Is probably involved in anaerobic glycerol metabolism (Probable). Active in vitro with the artificial electron acceptor 2,6-dichlorophenolindophenol (DCPIP), but not with NAD or NADP. Also displays a very low oxidase activity in vitro on glycerol 3-phosphate with O2 as the electron acceptor, but this activity is most likely not physiological (PubMed:34555022).</text>
</comment>
<comment type="catalytic activity">
    <reaction evidence="3">
        <text>sn-glycerol 3-phosphate + A = dihydroxyacetone phosphate + AH2</text>
        <dbReference type="Rhea" id="RHEA:68972"/>
        <dbReference type="ChEBI" id="CHEBI:13193"/>
        <dbReference type="ChEBI" id="CHEBI:17499"/>
        <dbReference type="ChEBI" id="CHEBI:57597"/>
        <dbReference type="ChEBI" id="CHEBI:57642"/>
    </reaction>
    <physiologicalReaction direction="left-to-right" evidence="4">
        <dbReference type="Rhea" id="RHEA:68973"/>
    </physiologicalReaction>
</comment>
<comment type="cofactor">
    <cofactor evidence="1">
        <name>[2Fe-2S] cluster</name>
        <dbReference type="ChEBI" id="CHEBI:190135"/>
    </cofactor>
    <text evidence="1">Binds 1 [2Fe-2S] cluster.</text>
</comment>
<comment type="biophysicochemical properties">
    <kinetics>
        <KM evidence="3">1.97 mM for glycerol-3-phosphate (at pH 7.4 and 25 degrees Celsius)</KM>
        <text evidence="3">kcat is 0.24 sec(-1) with DCPIP as electron acceptor (at pH 7.4 and 25 degrees Celsius). Since this protein comes from the thermophilic bacterium C.mitchellensis, whose optimal growth temperature is 55 degrees Celsius, it can be speculated that its catalytic efficiency would be higher at higher experimental temperatures.</text>
    </kinetics>
</comment>
<comment type="pathway">
    <text evidence="4">Polyol metabolism; glycerol degradation via glycerol kinase pathway; glycerone phosphate from sn-glycerol 3-phosphate (aerobic route): step 1/1.</text>
</comment>
<reference key="1">
    <citation type="submission" date="2015-09" db="EMBL/GenBank/DDBJ databases">
        <title>Draft genome sequence of a Caloramator mitchellensis, a moderate thermophile from the Great Artesian Basin of Australia.</title>
        <authorList>
            <person name="Patel B.K."/>
        </authorList>
    </citation>
    <scope>NUCLEOTIDE SEQUENCE [LARGE SCALE GENOMIC DNA]</scope>
    <source>
        <strain>DSM 25793 / JCM 15828 / KCTC 5735 / VF08</strain>
    </source>
</reference>
<reference key="2">
    <citation type="journal article" date="2021" name="PLoS Comput. Biol.">
        <title>Experimental and computational investigation of enzyme functional annotations uncovers misannotation in the EC 1.1.3.15 enzyme class.</title>
        <authorList>
            <person name="Rembeza E."/>
            <person name="Engqvist M.K.M."/>
        </authorList>
    </citation>
    <scope>FUNCTION</scope>
    <scope>CATALYTIC ACTIVITY</scope>
    <scope>BIOPHYSICOCHEMICAL PROPERTIES</scope>
</reference>
<dbReference type="EC" id="1.1.99.-" evidence="3"/>
<dbReference type="EMBL" id="LKHP01000002">
    <property type="protein sequence ID" value="KRQ87604.1"/>
    <property type="molecule type" value="Genomic_DNA"/>
</dbReference>
<dbReference type="RefSeq" id="WP_057976602.1">
    <property type="nucleotide sequence ID" value="NZ_LKHP01000002.1"/>
</dbReference>
<dbReference type="SMR" id="A0A0R3K2G2"/>
<dbReference type="STRING" id="908809.ABG79_00405"/>
<dbReference type="PATRIC" id="fig|908809.3.peg.410"/>
<dbReference type="OrthoDB" id="9801699at2"/>
<dbReference type="STRENDA-DB" id="KYMIAN">
    <property type="experiment" value="Characterisation of glycerol-3-phosphate dehydrogenase"/>
</dbReference>
<dbReference type="UniPathway" id="UPA00618">
    <property type="reaction ID" value="UER00674"/>
</dbReference>
<dbReference type="Proteomes" id="UP000052015">
    <property type="component" value="Unassembled WGS sequence"/>
</dbReference>
<dbReference type="GO" id="GO:0003973">
    <property type="term" value="F:(S)-2-hydroxy-acid oxidase activity"/>
    <property type="evidence" value="ECO:0007669"/>
    <property type="project" value="UniProtKB-EC"/>
</dbReference>
<dbReference type="GO" id="GO:0051537">
    <property type="term" value="F:2 iron, 2 sulfur cluster binding"/>
    <property type="evidence" value="ECO:0007669"/>
    <property type="project" value="UniProtKB-KW"/>
</dbReference>
<dbReference type="GO" id="GO:0046872">
    <property type="term" value="F:metal ion binding"/>
    <property type="evidence" value="ECO:0007669"/>
    <property type="project" value="UniProtKB-KW"/>
</dbReference>
<dbReference type="GO" id="GO:0019563">
    <property type="term" value="P:glycerol catabolic process"/>
    <property type="evidence" value="ECO:0007669"/>
    <property type="project" value="UniProtKB-UniPathway"/>
</dbReference>
<dbReference type="CDD" id="cd19946">
    <property type="entry name" value="GlpA-like_Fer2_BFD-like"/>
    <property type="match status" value="1"/>
</dbReference>
<dbReference type="Gene3D" id="1.10.10.1100">
    <property type="entry name" value="BFD-like [2Fe-2S]-binding domain"/>
    <property type="match status" value="1"/>
</dbReference>
<dbReference type="Gene3D" id="3.30.9.10">
    <property type="entry name" value="D-Amino Acid Oxidase, subunit A, domain 2"/>
    <property type="match status" value="1"/>
</dbReference>
<dbReference type="Gene3D" id="3.50.50.60">
    <property type="entry name" value="FAD/NAD(P)-binding domain"/>
    <property type="match status" value="1"/>
</dbReference>
<dbReference type="InterPro" id="IPR007419">
    <property type="entry name" value="BFD-like_2Fe2S-bd_dom"/>
</dbReference>
<dbReference type="InterPro" id="IPR041854">
    <property type="entry name" value="BFD-like_2Fe2S-bd_dom_sf"/>
</dbReference>
<dbReference type="InterPro" id="IPR006076">
    <property type="entry name" value="FAD-dep_OxRdtase"/>
</dbReference>
<dbReference type="InterPro" id="IPR036188">
    <property type="entry name" value="FAD/NAD-bd_sf"/>
</dbReference>
<dbReference type="InterPro" id="IPR052745">
    <property type="entry name" value="G3P_Oxidase/Oxidoreductase"/>
</dbReference>
<dbReference type="PANTHER" id="PTHR42720:SF1">
    <property type="entry name" value="GLYCEROL 3-PHOSPHATE OXIDASE"/>
    <property type="match status" value="1"/>
</dbReference>
<dbReference type="PANTHER" id="PTHR42720">
    <property type="entry name" value="GLYCEROL-3-PHOSPHATE DEHYDROGENASE"/>
    <property type="match status" value="1"/>
</dbReference>
<dbReference type="Pfam" id="PF01266">
    <property type="entry name" value="DAO"/>
    <property type="match status" value="1"/>
</dbReference>
<dbReference type="Pfam" id="PF04324">
    <property type="entry name" value="Fer2_BFD"/>
    <property type="match status" value="1"/>
</dbReference>
<dbReference type="SUPFAM" id="SSF51905">
    <property type="entry name" value="FAD/NAD(P)-binding domain"/>
    <property type="match status" value="1"/>
</dbReference>
<accession>A0A0R3K2G2</accession>
<keyword id="KW-0001">2Fe-2S</keyword>
<keyword id="KW-0274">FAD</keyword>
<keyword id="KW-0285">Flavoprotein</keyword>
<keyword id="KW-0408">Iron</keyword>
<keyword id="KW-0411">Iron-sulfur</keyword>
<keyword id="KW-0479">Metal-binding</keyword>
<keyword id="KW-0560">Oxidoreductase</keyword>
<keyword id="KW-1185">Reference proteome</keyword>
<protein>
    <recommendedName>
        <fullName evidence="5">Glycerol 3-phosphate dehydrogenase</fullName>
        <ecNumber evidence="3">1.1.99.-</ecNumber>
    </recommendedName>
</protein>
<feature type="chain" id="PRO_0000454854" description="Glycerol 3-phosphate dehydrogenase">
    <location>
        <begin position="1"/>
        <end position="480"/>
    </location>
</feature>
<feature type="active site" description="Proton acceptor" evidence="2">
    <location>
        <position position="49"/>
    </location>
</feature>
<feature type="binding site" evidence="2">
    <location>
        <position position="12"/>
    </location>
    <ligand>
        <name>FAD</name>
        <dbReference type="ChEBI" id="CHEBI:57692"/>
    </ligand>
</feature>
<feature type="binding site" evidence="2">
    <location>
        <position position="31"/>
    </location>
    <ligand>
        <name>FAD</name>
        <dbReference type="ChEBI" id="CHEBI:57692"/>
    </ligand>
</feature>
<feature type="binding site" evidence="2">
    <location>
        <begin position="40"/>
        <end position="41"/>
    </location>
    <ligand>
        <name>FAD</name>
        <dbReference type="ChEBI" id="CHEBI:57692"/>
    </ligand>
</feature>
<feature type="binding site" evidence="2">
    <location>
        <begin position="45"/>
        <end position="47"/>
    </location>
    <ligand>
        <name>FAD</name>
        <dbReference type="ChEBI" id="CHEBI:57692"/>
    </ligand>
</feature>
<feature type="binding site" evidence="2">
    <location>
        <position position="45"/>
    </location>
    <ligand>
        <name>sn-glycerol 3-phosphate</name>
        <dbReference type="ChEBI" id="CHEBI:57597"/>
    </ligand>
</feature>
<feature type="binding site" evidence="2">
    <location>
        <position position="49"/>
    </location>
    <ligand>
        <name>sn-glycerol 3-phosphate</name>
        <dbReference type="ChEBI" id="CHEBI:57597"/>
    </ligand>
</feature>
<feature type="binding site" evidence="2">
    <location>
        <position position="172"/>
    </location>
    <ligand>
        <name>FAD</name>
        <dbReference type="ChEBI" id="CHEBI:57692"/>
    </ligand>
</feature>
<feature type="binding site" evidence="2">
    <location>
        <position position="249"/>
    </location>
    <ligand>
        <name>sn-glycerol 3-phosphate</name>
        <dbReference type="ChEBI" id="CHEBI:57597"/>
    </ligand>
</feature>
<feature type="binding site" evidence="2">
    <location>
        <position position="310"/>
    </location>
    <ligand>
        <name>sn-glycerol 3-phosphate</name>
        <dbReference type="ChEBI" id="CHEBI:57597"/>
    </ligand>
</feature>
<feature type="binding site" evidence="2">
    <location>
        <begin position="335"/>
        <end position="336"/>
    </location>
    <ligand>
        <name>FAD</name>
        <dbReference type="ChEBI" id="CHEBI:57692"/>
    </ligand>
</feature>
<feature type="binding site" evidence="2">
    <location>
        <position position="337"/>
    </location>
    <ligand>
        <name>sn-glycerol 3-phosphate</name>
        <dbReference type="ChEBI" id="CHEBI:57597"/>
    </ligand>
</feature>
<feature type="binding site" evidence="2">
    <location>
        <position position="341"/>
    </location>
    <ligand>
        <name>FAD</name>
        <dbReference type="ChEBI" id="CHEBI:57692"/>
    </ligand>
</feature>
<feature type="binding site" evidence="1">
    <location>
        <position position="400"/>
    </location>
    <ligand>
        <name>[2Fe-2S] cluster</name>
        <dbReference type="ChEBI" id="CHEBI:190135"/>
    </ligand>
</feature>
<feature type="binding site" evidence="1">
    <location>
        <position position="402"/>
    </location>
    <ligand>
        <name>[2Fe-2S] cluster</name>
        <dbReference type="ChEBI" id="CHEBI:190135"/>
    </ligand>
</feature>
<feature type="binding site" evidence="1">
    <location>
        <position position="437"/>
    </location>
    <ligand>
        <name>[2Fe-2S] cluster</name>
        <dbReference type="ChEBI" id="CHEBI:190135"/>
    </ligand>
</feature>
<feature type="binding site" evidence="1">
    <location>
        <position position="442"/>
    </location>
    <ligand>
        <name>[2Fe-2S] cluster</name>
        <dbReference type="ChEBI" id="CHEBI:190135"/>
    </ligand>
</feature>